<gene>
    <name type="primary">prsJ</name>
</gene>
<organism>
    <name type="scientific">Escherichia coli</name>
    <dbReference type="NCBI Taxonomy" id="562"/>
    <lineage>
        <taxon>Bacteria</taxon>
        <taxon>Pseudomonadati</taxon>
        <taxon>Pseudomonadota</taxon>
        <taxon>Gammaproteobacteria</taxon>
        <taxon>Enterobacterales</taxon>
        <taxon>Enterobacteriaceae</taxon>
        <taxon>Escherichia</taxon>
    </lineage>
</organism>
<dbReference type="EMBL" id="X62158">
    <property type="protein sequence ID" value="CAA44085.1"/>
    <property type="molecule type" value="Genomic_DNA"/>
</dbReference>
<dbReference type="PIR" id="S25208">
    <property type="entry name" value="S25208"/>
</dbReference>
<dbReference type="GO" id="GO:0042597">
    <property type="term" value="C:periplasmic space"/>
    <property type="evidence" value="ECO:0007669"/>
    <property type="project" value="UniProtKB-SubCell"/>
</dbReference>
<dbReference type="InterPro" id="IPR029224">
    <property type="entry name" value="PapJ"/>
</dbReference>
<dbReference type="Pfam" id="PF14855">
    <property type="entry name" value="PapJ"/>
    <property type="match status" value="1"/>
</dbReference>
<proteinExistence type="inferred from homology"/>
<reference key="1">
    <citation type="journal article" date="1992" name="Mol. Microbiol.">
        <title>Horizontal gene transfer of the Escherichia coli pap and prs pili operons as a mechanism for the development of tissue-specific adhesive properties.</title>
        <authorList>
            <person name="Marklund B.-I."/>
            <person name="Tennent J.M."/>
            <person name="Garcia E."/>
            <person name="Hamers A."/>
            <person name="Baga M."/>
            <person name="Lindberg F."/>
            <person name="Gaastra W."/>
            <person name="Normark S."/>
        </authorList>
    </citation>
    <scope>NUCLEOTIDE SEQUENCE [GENOMIC DNA]</scope>
    <source>
        <strain>1442</strain>
    </source>
</reference>
<sequence>MVVNKTTAVLYLIALSLSGFIHTFLRAEERGIYDDVFTADELHHYRINERGGRTGSLAVSGALLSSPCTLVSNEVPLSLRPENHSASRGAPLMLRLAGCGDGGALQPGKRGVAMTVSGSLVTGPGSGSALLPDRKLSGCDHLVIHDGDTFLLCRPDRRQEEMLAAWRKRATQEGEYSDARSNPAMLRLSIKYE</sequence>
<comment type="function">
    <text>This protein maintains pilus integrity and thus is an important participant in pilus assembly. It may function as molecular chaperone directly or indirectly in the correct assembly of PapA subunits.</text>
</comment>
<comment type="subcellular location">
    <subcellularLocation>
        <location>Periplasm</location>
    </subcellularLocation>
</comment>
<name>PRSJ_ECOLX</name>
<protein>
    <recommendedName>
        <fullName>Protein PrsJ</fullName>
    </recommendedName>
</protein>
<feature type="signal peptide" evidence="1">
    <location>
        <begin position="1"/>
        <end position="27"/>
    </location>
</feature>
<feature type="chain" id="PRO_0000022156" description="Protein PrsJ">
    <location>
        <begin position="28"/>
        <end position="193"/>
    </location>
</feature>
<keyword id="KW-0143">Chaperone</keyword>
<keyword id="KW-0574">Periplasm</keyword>
<keyword id="KW-0732">Signal</keyword>
<accession>P42189</accession>
<evidence type="ECO:0000250" key="1"/>